<name>FK120_ARATH</name>
<dbReference type="EMBL" id="AB017061">
    <property type="protein sequence ID" value="BAB10322.1"/>
    <property type="molecule type" value="Genomic_DNA"/>
</dbReference>
<dbReference type="EMBL" id="CP002688">
    <property type="protein sequence ID" value="AED95752.1"/>
    <property type="molecule type" value="Genomic_DNA"/>
</dbReference>
<dbReference type="EMBL" id="BT030316">
    <property type="protein sequence ID" value="ABO09880.1"/>
    <property type="molecule type" value="mRNA"/>
</dbReference>
<dbReference type="RefSeq" id="NP_199709.1">
    <property type="nucleotide sequence ID" value="NM_124275.3"/>
</dbReference>
<dbReference type="SMR" id="Q9FI72"/>
<dbReference type="FunCoup" id="Q9FI72">
    <property type="interactions" value="4"/>
</dbReference>
<dbReference type="STRING" id="3702.Q9FI72"/>
<dbReference type="PaxDb" id="3702-AT5G48980.1"/>
<dbReference type="EnsemblPlants" id="AT5G48980.1">
    <property type="protein sequence ID" value="AT5G48980.1"/>
    <property type="gene ID" value="AT5G48980"/>
</dbReference>
<dbReference type="GeneID" id="834957"/>
<dbReference type="Gramene" id="AT5G48980.1">
    <property type="protein sequence ID" value="AT5G48980.1"/>
    <property type="gene ID" value="AT5G48980"/>
</dbReference>
<dbReference type="KEGG" id="ath:AT5G48980"/>
<dbReference type="Araport" id="AT5G48980"/>
<dbReference type="TAIR" id="AT5G48980"/>
<dbReference type="eggNOG" id="KOG1072">
    <property type="taxonomic scope" value="Eukaryota"/>
</dbReference>
<dbReference type="HOGENOM" id="CLU_032521_1_2_1"/>
<dbReference type="InParanoid" id="Q9FI72"/>
<dbReference type="OMA" id="RTHTWNE"/>
<dbReference type="PhylomeDB" id="Q9FI72"/>
<dbReference type="PRO" id="PR:Q9FI72"/>
<dbReference type="Proteomes" id="UP000006548">
    <property type="component" value="Chromosome 5"/>
</dbReference>
<dbReference type="ExpressionAtlas" id="Q9FI72">
    <property type="expression patterns" value="baseline and differential"/>
</dbReference>
<dbReference type="CDD" id="cd22152">
    <property type="entry name" value="F-box_AtAFR-like"/>
    <property type="match status" value="1"/>
</dbReference>
<dbReference type="Gene3D" id="2.120.10.80">
    <property type="entry name" value="Kelch-type beta propeller"/>
    <property type="match status" value="1"/>
</dbReference>
<dbReference type="InterPro" id="IPR036047">
    <property type="entry name" value="F-box-like_dom_sf"/>
</dbReference>
<dbReference type="InterPro" id="IPR050354">
    <property type="entry name" value="F-box/kelch-repeat_ARATH"/>
</dbReference>
<dbReference type="InterPro" id="IPR001810">
    <property type="entry name" value="F-box_dom"/>
</dbReference>
<dbReference type="InterPro" id="IPR015915">
    <property type="entry name" value="Kelch-typ_b-propeller"/>
</dbReference>
<dbReference type="PANTHER" id="PTHR24414">
    <property type="entry name" value="F-BOX/KELCH-REPEAT PROTEIN SKIP4"/>
    <property type="match status" value="1"/>
</dbReference>
<dbReference type="PANTHER" id="PTHR24414:SF184">
    <property type="entry name" value="GALACTOSE OXIDASE_KELCH REPEAT SUPERFAMILY PROTEIN"/>
    <property type="match status" value="1"/>
</dbReference>
<dbReference type="Pfam" id="PF00646">
    <property type="entry name" value="F-box"/>
    <property type="match status" value="1"/>
</dbReference>
<dbReference type="Pfam" id="PF25210">
    <property type="entry name" value="Kelch_FKB95"/>
    <property type="match status" value="1"/>
</dbReference>
<dbReference type="SMART" id="SM00256">
    <property type="entry name" value="FBOX"/>
    <property type="match status" value="1"/>
</dbReference>
<dbReference type="SUPFAM" id="SSF81383">
    <property type="entry name" value="F-box domain"/>
    <property type="match status" value="1"/>
</dbReference>
<dbReference type="SUPFAM" id="SSF117281">
    <property type="entry name" value="Kelch motif"/>
    <property type="match status" value="1"/>
</dbReference>
<dbReference type="PROSITE" id="PS50181">
    <property type="entry name" value="FBOX"/>
    <property type="match status" value="1"/>
</dbReference>
<sequence>MADSQRLSTASGVKDGQPPWKKKKLSNDTTSNPSLPYDVILIILARVSRSYYTNLSLVSKSFRSILTSPELYKTRTLLGKTENFLYVCLRFPDEANPRWFTLYRKPNQTLTDHTTKKKKKKKKKEEKSSVNLLAPISILNSHPVEWSAIISVDHYLYAISADIEKAPYSNVPYLDCRTHTWNEAPRMRLAHTNSEFEGIVYLPGSFESPDSLNCVEVYNTMTQTWKPVPPEKRMFKLENLEKKIYYKSFHLDSRAGKGLSLSYKSKHLTCGLVVLDTVDSYLRSSCMIENIAYFYRKGNFIWRGLDGKILVYGKIEGLEGLPKFSRYSSVQLAEYGGKLVVLWDKYVPASGYKEKMIWCAEISLEKRNGKEIWGNVEWFDAVLTVPKSYKILCATAATL</sequence>
<feature type="chain" id="PRO_0000283275" description="F-box/kelch-repeat protein At5g48980">
    <location>
        <begin position="1"/>
        <end position="399"/>
    </location>
</feature>
<feature type="domain" description="F-box" evidence="1">
    <location>
        <begin position="29"/>
        <end position="75"/>
    </location>
</feature>
<feature type="repeat" description="Kelch">
    <location>
        <begin position="199"/>
        <end position="248"/>
    </location>
</feature>
<feature type="region of interest" description="Disordered" evidence="2">
    <location>
        <begin position="1"/>
        <end position="29"/>
    </location>
</feature>
<feature type="compositionally biased region" description="Polar residues" evidence="2">
    <location>
        <begin position="1"/>
        <end position="11"/>
    </location>
</feature>
<proteinExistence type="evidence at transcript level"/>
<gene>
    <name type="ordered locus">At5g48980</name>
    <name type="ORF">K19E20.11</name>
</gene>
<reference key="1">
    <citation type="journal article" date="1999" name="DNA Res.">
        <title>Structural analysis of Arabidopsis thaliana chromosome 5. IX. Sequence features of the regions of 1,011,550 bp covered by seventeen P1 and TAC clones.</title>
        <authorList>
            <person name="Kaneko T."/>
            <person name="Katoh T."/>
            <person name="Sato S."/>
            <person name="Nakamura Y."/>
            <person name="Asamizu E."/>
            <person name="Kotani H."/>
            <person name="Miyajima N."/>
            <person name="Tabata S."/>
        </authorList>
    </citation>
    <scope>NUCLEOTIDE SEQUENCE [LARGE SCALE GENOMIC DNA]</scope>
    <source>
        <strain>cv. Columbia</strain>
    </source>
</reference>
<reference key="2">
    <citation type="journal article" date="2017" name="Plant J.">
        <title>Araport11: a complete reannotation of the Arabidopsis thaliana reference genome.</title>
        <authorList>
            <person name="Cheng C.Y."/>
            <person name="Krishnakumar V."/>
            <person name="Chan A.P."/>
            <person name="Thibaud-Nissen F."/>
            <person name="Schobel S."/>
            <person name="Town C.D."/>
        </authorList>
    </citation>
    <scope>GENOME REANNOTATION</scope>
    <source>
        <strain>cv. Columbia</strain>
    </source>
</reference>
<reference key="3">
    <citation type="submission" date="2007-02" db="EMBL/GenBank/DDBJ databases">
        <title>Arabidopsis ORF clones.</title>
        <authorList>
            <person name="Bautista V.R."/>
            <person name="Kim C.J."/>
            <person name="Chen H."/>
            <person name="Wu S.Y."/>
            <person name="De Los Reyes C."/>
            <person name="Ecker J.R."/>
        </authorList>
    </citation>
    <scope>NUCLEOTIDE SEQUENCE [LARGE SCALE MRNA]</scope>
    <source>
        <strain>cv. Columbia</strain>
    </source>
</reference>
<organism>
    <name type="scientific">Arabidopsis thaliana</name>
    <name type="common">Mouse-ear cress</name>
    <dbReference type="NCBI Taxonomy" id="3702"/>
    <lineage>
        <taxon>Eukaryota</taxon>
        <taxon>Viridiplantae</taxon>
        <taxon>Streptophyta</taxon>
        <taxon>Embryophyta</taxon>
        <taxon>Tracheophyta</taxon>
        <taxon>Spermatophyta</taxon>
        <taxon>Magnoliopsida</taxon>
        <taxon>eudicotyledons</taxon>
        <taxon>Gunneridae</taxon>
        <taxon>Pentapetalae</taxon>
        <taxon>rosids</taxon>
        <taxon>malvids</taxon>
        <taxon>Brassicales</taxon>
        <taxon>Brassicaceae</taxon>
        <taxon>Camelineae</taxon>
        <taxon>Arabidopsis</taxon>
    </lineage>
</organism>
<keyword id="KW-0880">Kelch repeat</keyword>
<keyword id="KW-1185">Reference proteome</keyword>
<evidence type="ECO:0000255" key="1">
    <source>
        <dbReference type="PROSITE-ProRule" id="PRU00080"/>
    </source>
</evidence>
<evidence type="ECO:0000256" key="2">
    <source>
        <dbReference type="SAM" id="MobiDB-lite"/>
    </source>
</evidence>
<protein>
    <recommendedName>
        <fullName>F-box/kelch-repeat protein At5g48980</fullName>
    </recommendedName>
</protein>
<accession>Q9FI72</accession>